<dbReference type="EC" id="7.-.-.-"/>
<dbReference type="EMBL" id="BA000022">
    <property type="protein sequence ID" value="BAA10382.1"/>
    <property type="molecule type" value="Genomic_DNA"/>
</dbReference>
<dbReference type="PIR" id="S76536">
    <property type="entry name" value="S76536"/>
</dbReference>
<dbReference type="SMR" id="Q55740"/>
<dbReference type="FunCoup" id="Q55740">
    <property type="interactions" value="265"/>
</dbReference>
<dbReference type="IntAct" id="Q55740">
    <property type="interactions" value="1"/>
</dbReference>
<dbReference type="STRING" id="1148.gene:10499883"/>
<dbReference type="PaxDb" id="1148-1001651"/>
<dbReference type="EnsemblBacteria" id="BAA10382">
    <property type="protein sequence ID" value="BAA10382"/>
    <property type="gene ID" value="BAA10382"/>
</dbReference>
<dbReference type="KEGG" id="syn:sll0385"/>
<dbReference type="eggNOG" id="COG1122">
    <property type="taxonomic scope" value="Bacteria"/>
</dbReference>
<dbReference type="InParanoid" id="Q55740"/>
<dbReference type="PhylomeDB" id="Q55740"/>
<dbReference type="Proteomes" id="UP000001425">
    <property type="component" value="Chromosome"/>
</dbReference>
<dbReference type="GO" id="GO:0043190">
    <property type="term" value="C:ATP-binding cassette (ABC) transporter complex"/>
    <property type="evidence" value="ECO:0000318"/>
    <property type="project" value="GO_Central"/>
</dbReference>
<dbReference type="GO" id="GO:0005524">
    <property type="term" value="F:ATP binding"/>
    <property type="evidence" value="ECO:0000318"/>
    <property type="project" value="GO_Central"/>
</dbReference>
<dbReference type="GO" id="GO:0016887">
    <property type="term" value="F:ATP hydrolysis activity"/>
    <property type="evidence" value="ECO:0007669"/>
    <property type="project" value="InterPro"/>
</dbReference>
<dbReference type="GO" id="GO:0042626">
    <property type="term" value="F:ATPase-coupled transmembrane transporter activity"/>
    <property type="evidence" value="ECO:0000318"/>
    <property type="project" value="GO_Central"/>
</dbReference>
<dbReference type="CDD" id="cd03225">
    <property type="entry name" value="ABC_cobalt_CbiO_domain1"/>
    <property type="match status" value="1"/>
</dbReference>
<dbReference type="FunFam" id="3.40.50.300:FF:000224">
    <property type="entry name" value="Energy-coupling factor transporter ATP-binding protein EcfA"/>
    <property type="match status" value="1"/>
</dbReference>
<dbReference type="Gene3D" id="3.40.50.300">
    <property type="entry name" value="P-loop containing nucleotide triphosphate hydrolases"/>
    <property type="match status" value="1"/>
</dbReference>
<dbReference type="InterPro" id="IPR003593">
    <property type="entry name" value="AAA+_ATPase"/>
</dbReference>
<dbReference type="InterPro" id="IPR003439">
    <property type="entry name" value="ABC_transporter-like_ATP-bd"/>
</dbReference>
<dbReference type="InterPro" id="IPR017871">
    <property type="entry name" value="ABC_transporter-like_CS"/>
</dbReference>
<dbReference type="InterPro" id="IPR015856">
    <property type="entry name" value="ABC_transpr_CbiO/EcfA_su"/>
</dbReference>
<dbReference type="InterPro" id="IPR050095">
    <property type="entry name" value="ECF_ABC_transporter_ATP-bd"/>
</dbReference>
<dbReference type="InterPro" id="IPR027417">
    <property type="entry name" value="P-loop_NTPase"/>
</dbReference>
<dbReference type="PANTHER" id="PTHR43553:SF24">
    <property type="entry name" value="ENERGY-COUPLING FACTOR TRANSPORTER ATP-BINDING PROTEIN ECFA1"/>
    <property type="match status" value="1"/>
</dbReference>
<dbReference type="PANTHER" id="PTHR43553">
    <property type="entry name" value="HEAVY METAL TRANSPORTER"/>
    <property type="match status" value="1"/>
</dbReference>
<dbReference type="Pfam" id="PF00005">
    <property type="entry name" value="ABC_tran"/>
    <property type="match status" value="1"/>
</dbReference>
<dbReference type="SMART" id="SM00382">
    <property type="entry name" value="AAA"/>
    <property type="match status" value="1"/>
</dbReference>
<dbReference type="SUPFAM" id="SSF52540">
    <property type="entry name" value="P-loop containing nucleoside triphosphate hydrolases"/>
    <property type="match status" value="1"/>
</dbReference>
<dbReference type="PROSITE" id="PS00211">
    <property type="entry name" value="ABC_TRANSPORTER_1"/>
    <property type="match status" value="1"/>
</dbReference>
<dbReference type="PROSITE" id="PS50893">
    <property type="entry name" value="ABC_TRANSPORTER_2"/>
    <property type="match status" value="1"/>
</dbReference>
<proteinExistence type="inferred from homology"/>
<reference key="1">
    <citation type="journal article" date="1995" name="DNA Res.">
        <title>Sequence analysis of the genome of the unicellular cyanobacterium Synechocystis sp. strain PCC6803. I. Sequence features in the 1 Mb region from map positions 64% to 92% of the genome.</title>
        <authorList>
            <person name="Kaneko T."/>
            <person name="Tanaka A."/>
            <person name="Sato S."/>
            <person name="Kotani H."/>
            <person name="Sazuka T."/>
            <person name="Miyajima N."/>
            <person name="Sugiura M."/>
            <person name="Tabata S."/>
        </authorList>
    </citation>
    <scope>NUCLEOTIDE SEQUENCE [LARGE SCALE GENOMIC DNA]</scope>
    <source>
        <strain>ATCC 27184 / PCC 6803 / N-1</strain>
    </source>
</reference>
<reference key="2">
    <citation type="journal article" date="1996" name="DNA Res.">
        <title>Sequence analysis of the genome of the unicellular cyanobacterium Synechocystis sp. strain PCC6803. II. Sequence determination of the entire genome and assignment of potential protein-coding regions.</title>
        <authorList>
            <person name="Kaneko T."/>
            <person name="Sato S."/>
            <person name="Kotani H."/>
            <person name="Tanaka A."/>
            <person name="Asamizu E."/>
            <person name="Nakamura Y."/>
            <person name="Miyajima N."/>
            <person name="Hirosawa M."/>
            <person name="Sugiura M."/>
            <person name="Sasamoto S."/>
            <person name="Kimura T."/>
            <person name="Hosouchi T."/>
            <person name="Matsuno A."/>
            <person name="Muraki A."/>
            <person name="Nakazaki N."/>
            <person name="Naruo K."/>
            <person name="Okumura S."/>
            <person name="Shimpo S."/>
            <person name="Takeuchi C."/>
            <person name="Wada T."/>
            <person name="Watanabe A."/>
            <person name="Yamada M."/>
            <person name="Yasuda M."/>
            <person name="Tabata S."/>
        </authorList>
    </citation>
    <scope>NUCLEOTIDE SEQUENCE [LARGE SCALE GENOMIC DNA]</scope>
    <source>
        <strain>ATCC 27184 / PCC 6803 / Kazusa</strain>
    </source>
</reference>
<evidence type="ECO:0000250" key="1"/>
<evidence type="ECO:0000255" key="2">
    <source>
        <dbReference type="PROSITE-ProRule" id="PRU00434"/>
    </source>
</evidence>
<evidence type="ECO:0000305" key="3"/>
<comment type="function">
    <text evidence="1">Probably part of an ABC transporter complex. Responsible for energy coupling to the transport system (By similarity).</text>
</comment>
<comment type="subcellular location">
    <subcellularLocation>
        <location evidence="1">Cell inner membrane</location>
        <topology evidence="1">Peripheral membrane protein</topology>
    </subcellularLocation>
</comment>
<comment type="similarity">
    <text evidence="3">Belongs to the ABC transporter superfamily.</text>
</comment>
<gene>
    <name type="ordered locus">sll0385</name>
</gene>
<keyword id="KW-0067">ATP-binding</keyword>
<keyword id="KW-0997">Cell inner membrane</keyword>
<keyword id="KW-1003">Cell membrane</keyword>
<keyword id="KW-0472">Membrane</keyword>
<keyword id="KW-0547">Nucleotide-binding</keyword>
<keyword id="KW-1185">Reference proteome</keyword>
<keyword id="KW-1278">Translocase</keyword>
<keyword id="KW-0813">Transport</keyword>
<protein>
    <recommendedName>
        <fullName>Putative ABC transporter ATP-binding protein sll0385</fullName>
        <ecNumber>7.-.-.-</ecNumber>
    </recommendedName>
</protein>
<feature type="chain" id="PRO_0000092114" description="Putative ABC transporter ATP-binding protein sll0385">
    <location>
        <begin position="1"/>
        <end position="284"/>
    </location>
</feature>
<feature type="domain" description="ABC transporter" evidence="2">
    <location>
        <begin position="51"/>
        <end position="278"/>
    </location>
</feature>
<feature type="binding site" evidence="2">
    <location>
        <begin position="84"/>
        <end position="91"/>
    </location>
    <ligand>
        <name>ATP</name>
        <dbReference type="ChEBI" id="CHEBI:30616"/>
    </ligand>
</feature>
<sequence>MFNGFRFNGNRIGDRRWFCGGGGEPVTGTNVRAMDRSQEKEAIKSPIPPAIRVRELSFAYGGQTPVLNNLAWQVAPGERLGIIGHNGCGKTTLFLLLCGLLKASAGTIQLLGQALEAGKFLPEVGFLFQNPTDQLFATSVWDDIAFGPQNMGLSPAQVTERVNQAAELTGITSLLDRLPQHLSGGEKQMVAIAGLLAMAPKILLCDEPTASLDIKARRQLINFLGQFQQTLLISSHDLEFVLEVCNRVIIIDQGQIVADGPAQEIMADQTLMESHGLEKPYSLR</sequence>
<organism>
    <name type="scientific">Synechocystis sp. (strain ATCC 27184 / PCC 6803 / Kazusa)</name>
    <dbReference type="NCBI Taxonomy" id="1111708"/>
    <lineage>
        <taxon>Bacteria</taxon>
        <taxon>Bacillati</taxon>
        <taxon>Cyanobacteriota</taxon>
        <taxon>Cyanophyceae</taxon>
        <taxon>Synechococcales</taxon>
        <taxon>Merismopediaceae</taxon>
        <taxon>Synechocystis</taxon>
    </lineage>
</organism>
<accession>Q55740</accession>
<name>Y385_SYNY3</name>